<evidence type="ECO:0000255" key="1">
    <source>
        <dbReference type="HAMAP-Rule" id="MF_00451"/>
    </source>
</evidence>
<feature type="chain" id="PRO_0000267790" description="Nucleoside diphosphate kinase">
    <location>
        <begin position="1"/>
        <end position="145"/>
    </location>
</feature>
<feature type="active site" description="Pros-phosphohistidine intermediate" evidence="1">
    <location>
        <position position="117"/>
    </location>
</feature>
<feature type="binding site" evidence="1">
    <location>
        <position position="11"/>
    </location>
    <ligand>
        <name>ATP</name>
        <dbReference type="ChEBI" id="CHEBI:30616"/>
    </ligand>
</feature>
<feature type="binding site" evidence="1">
    <location>
        <position position="59"/>
    </location>
    <ligand>
        <name>ATP</name>
        <dbReference type="ChEBI" id="CHEBI:30616"/>
    </ligand>
</feature>
<feature type="binding site" evidence="1">
    <location>
        <position position="87"/>
    </location>
    <ligand>
        <name>ATP</name>
        <dbReference type="ChEBI" id="CHEBI:30616"/>
    </ligand>
</feature>
<feature type="binding site" evidence="1">
    <location>
        <position position="93"/>
    </location>
    <ligand>
        <name>ATP</name>
        <dbReference type="ChEBI" id="CHEBI:30616"/>
    </ligand>
</feature>
<feature type="binding site" evidence="1">
    <location>
        <position position="104"/>
    </location>
    <ligand>
        <name>ATP</name>
        <dbReference type="ChEBI" id="CHEBI:30616"/>
    </ligand>
</feature>
<feature type="binding site" evidence="1">
    <location>
        <position position="114"/>
    </location>
    <ligand>
        <name>ATP</name>
        <dbReference type="ChEBI" id="CHEBI:30616"/>
    </ligand>
</feature>
<protein>
    <recommendedName>
        <fullName evidence="1">Nucleoside diphosphate kinase</fullName>
        <shortName evidence="1">NDK</shortName>
        <shortName evidence="1">NDP kinase</shortName>
        <ecNumber evidence="1">2.7.4.6</ecNumber>
    </recommendedName>
    <alternativeName>
        <fullName evidence="1">Nucleoside-2-P kinase</fullName>
    </alternativeName>
</protein>
<sequence>MAIERTLSIIKPDGLEKGVIGKIISRFEEKGLKPVAIRLQHLSQAQAEGFYAVHKARPFFKDLVQFMISGPVVLMVLEGENAVLANRDIMGATNPAQAAEGTIRKDFATSIDKNTVHGSDSLENAKIEIAYFFRETEIHSYPYQK</sequence>
<organism>
    <name type="scientific">Myxococcus xanthus (strain DK1622)</name>
    <dbReference type="NCBI Taxonomy" id="246197"/>
    <lineage>
        <taxon>Bacteria</taxon>
        <taxon>Pseudomonadati</taxon>
        <taxon>Myxococcota</taxon>
        <taxon>Myxococcia</taxon>
        <taxon>Myxococcales</taxon>
        <taxon>Cystobacterineae</taxon>
        <taxon>Myxococcaceae</taxon>
        <taxon>Myxococcus</taxon>
    </lineage>
</organism>
<gene>
    <name evidence="1" type="primary">ndk</name>
    <name type="ordered locus">MXAN_3543</name>
</gene>
<dbReference type="EC" id="2.7.4.6" evidence="1"/>
<dbReference type="EMBL" id="CP000113">
    <property type="protein sequence ID" value="ABF90253.1"/>
    <property type="molecule type" value="Genomic_DNA"/>
</dbReference>
<dbReference type="RefSeq" id="WP_011553572.1">
    <property type="nucleotide sequence ID" value="NC_008095.1"/>
</dbReference>
<dbReference type="SMR" id="Q1D6I7"/>
<dbReference type="STRING" id="246197.MXAN_3543"/>
<dbReference type="EnsemblBacteria" id="ABF90253">
    <property type="protein sequence ID" value="ABF90253"/>
    <property type="gene ID" value="MXAN_3543"/>
</dbReference>
<dbReference type="GeneID" id="41360888"/>
<dbReference type="KEGG" id="mxa:MXAN_3543"/>
<dbReference type="eggNOG" id="COG0105">
    <property type="taxonomic scope" value="Bacteria"/>
</dbReference>
<dbReference type="HOGENOM" id="CLU_060216_8_1_7"/>
<dbReference type="OrthoDB" id="9801161at2"/>
<dbReference type="Proteomes" id="UP000002402">
    <property type="component" value="Chromosome"/>
</dbReference>
<dbReference type="GO" id="GO:0005737">
    <property type="term" value="C:cytoplasm"/>
    <property type="evidence" value="ECO:0007669"/>
    <property type="project" value="UniProtKB-SubCell"/>
</dbReference>
<dbReference type="GO" id="GO:0005524">
    <property type="term" value="F:ATP binding"/>
    <property type="evidence" value="ECO:0007669"/>
    <property type="project" value="UniProtKB-UniRule"/>
</dbReference>
<dbReference type="GO" id="GO:0046872">
    <property type="term" value="F:metal ion binding"/>
    <property type="evidence" value="ECO:0007669"/>
    <property type="project" value="UniProtKB-KW"/>
</dbReference>
<dbReference type="GO" id="GO:0004550">
    <property type="term" value="F:nucleoside diphosphate kinase activity"/>
    <property type="evidence" value="ECO:0007669"/>
    <property type="project" value="UniProtKB-UniRule"/>
</dbReference>
<dbReference type="GO" id="GO:0006241">
    <property type="term" value="P:CTP biosynthetic process"/>
    <property type="evidence" value="ECO:0007669"/>
    <property type="project" value="UniProtKB-UniRule"/>
</dbReference>
<dbReference type="GO" id="GO:0006183">
    <property type="term" value="P:GTP biosynthetic process"/>
    <property type="evidence" value="ECO:0007669"/>
    <property type="project" value="UniProtKB-UniRule"/>
</dbReference>
<dbReference type="GO" id="GO:0006228">
    <property type="term" value="P:UTP biosynthetic process"/>
    <property type="evidence" value="ECO:0007669"/>
    <property type="project" value="UniProtKB-UniRule"/>
</dbReference>
<dbReference type="CDD" id="cd04413">
    <property type="entry name" value="NDPk_I"/>
    <property type="match status" value="1"/>
</dbReference>
<dbReference type="FunFam" id="3.30.70.141:FF:000001">
    <property type="entry name" value="Nucleoside diphosphate kinase"/>
    <property type="match status" value="1"/>
</dbReference>
<dbReference type="Gene3D" id="3.30.70.141">
    <property type="entry name" value="Nucleoside diphosphate kinase-like domain"/>
    <property type="match status" value="1"/>
</dbReference>
<dbReference type="HAMAP" id="MF_00451">
    <property type="entry name" value="NDP_kinase"/>
    <property type="match status" value="1"/>
</dbReference>
<dbReference type="InterPro" id="IPR034907">
    <property type="entry name" value="NDK-like_dom"/>
</dbReference>
<dbReference type="InterPro" id="IPR036850">
    <property type="entry name" value="NDK-like_dom_sf"/>
</dbReference>
<dbReference type="InterPro" id="IPR001564">
    <property type="entry name" value="Nucleoside_diP_kinase"/>
</dbReference>
<dbReference type="InterPro" id="IPR023005">
    <property type="entry name" value="Nucleoside_diP_kinase_AS"/>
</dbReference>
<dbReference type="NCBIfam" id="NF001908">
    <property type="entry name" value="PRK00668.1"/>
    <property type="match status" value="1"/>
</dbReference>
<dbReference type="PANTHER" id="PTHR11349">
    <property type="entry name" value="NUCLEOSIDE DIPHOSPHATE KINASE"/>
    <property type="match status" value="1"/>
</dbReference>
<dbReference type="Pfam" id="PF00334">
    <property type="entry name" value="NDK"/>
    <property type="match status" value="1"/>
</dbReference>
<dbReference type="PRINTS" id="PR01243">
    <property type="entry name" value="NUCDPKINASE"/>
</dbReference>
<dbReference type="SMART" id="SM00562">
    <property type="entry name" value="NDK"/>
    <property type="match status" value="1"/>
</dbReference>
<dbReference type="SUPFAM" id="SSF54919">
    <property type="entry name" value="Nucleoside diphosphate kinase, NDK"/>
    <property type="match status" value="1"/>
</dbReference>
<dbReference type="PROSITE" id="PS00469">
    <property type="entry name" value="NDPK"/>
    <property type="match status" value="1"/>
</dbReference>
<dbReference type="PROSITE" id="PS51374">
    <property type="entry name" value="NDPK_LIKE"/>
    <property type="match status" value="1"/>
</dbReference>
<proteinExistence type="inferred from homology"/>
<name>NDK_MYXXD</name>
<comment type="function">
    <text evidence="1">Major role in the synthesis of nucleoside triphosphates other than ATP. The ATP gamma phosphate is transferred to the NDP beta phosphate via a ping-pong mechanism, using a phosphorylated active-site intermediate.</text>
</comment>
<comment type="catalytic activity">
    <reaction evidence="1">
        <text>a 2'-deoxyribonucleoside 5'-diphosphate + ATP = a 2'-deoxyribonucleoside 5'-triphosphate + ADP</text>
        <dbReference type="Rhea" id="RHEA:44640"/>
        <dbReference type="ChEBI" id="CHEBI:30616"/>
        <dbReference type="ChEBI" id="CHEBI:61560"/>
        <dbReference type="ChEBI" id="CHEBI:73316"/>
        <dbReference type="ChEBI" id="CHEBI:456216"/>
        <dbReference type="EC" id="2.7.4.6"/>
    </reaction>
</comment>
<comment type="catalytic activity">
    <reaction evidence="1">
        <text>a ribonucleoside 5'-diphosphate + ATP = a ribonucleoside 5'-triphosphate + ADP</text>
        <dbReference type="Rhea" id="RHEA:18113"/>
        <dbReference type="ChEBI" id="CHEBI:30616"/>
        <dbReference type="ChEBI" id="CHEBI:57930"/>
        <dbReference type="ChEBI" id="CHEBI:61557"/>
        <dbReference type="ChEBI" id="CHEBI:456216"/>
        <dbReference type="EC" id="2.7.4.6"/>
    </reaction>
</comment>
<comment type="cofactor">
    <cofactor evidence="1">
        <name>Mg(2+)</name>
        <dbReference type="ChEBI" id="CHEBI:18420"/>
    </cofactor>
</comment>
<comment type="subunit">
    <text evidence="1">Homotetramer.</text>
</comment>
<comment type="subcellular location">
    <subcellularLocation>
        <location evidence="1">Cytoplasm</location>
    </subcellularLocation>
</comment>
<comment type="similarity">
    <text evidence="1">Belongs to the NDK family.</text>
</comment>
<accession>Q1D6I7</accession>
<reference key="1">
    <citation type="journal article" date="2006" name="Proc. Natl. Acad. Sci. U.S.A.">
        <title>Evolution of sensory complexity recorded in a myxobacterial genome.</title>
        <authorList>
            <person name="Goldman B.S."/>
            <person name="Nierman W.C."/>
            <person name="Kaiser D."/>
            <person name="Slater S.C."/>
            <person name="Durkin A.S."/>
            <person name="Eisen J.A."/>
            <person name="Ronning C.M."/>
            <person name="Barbazuk W.B."/>
            <person name="Blanchard M."/>
            <person name="Field C."/>
            <person name="Halling C."/>
            <person name="Hinkle G."/>
            <person name="Iartchuk O."/>
            <person name="Kim H.S."/>
            <person name="Mackenzie C."/>
            <person name="Madupu R."/>
            <person name="Miller N."/>
            <person name="Shvartsbeyn A."/>
            <person name="Sullivan S.A."/>
            <person name="Vaudin M."/>
            <person name="Wiegand R."/>
            <person name="Kaplan H.B."/>
        </authorList>
    </citation>
    <scope>NUCLEOTIDE SEQUENCE [LARGE SCALE GENOMIC DNA]</scope>
    <source>
        <strain>DK1622</strain>
    </source>
</reference>
<keyword id="KW-0067">ATP-binding</keyword>
<keyword id="KW-0963">Cytoplasm</keyword>
<keyword id="KW-0418">Kinase</keyword>
<keyword id="KW-0460">Magnesium</keyword>
<keyword id="KW-0479">Metal-binding</keyword>
<keyword id="KW-0546">Nucleotide metabolism</keyword>
<keyword id="KW-0547">Nucleotide-binding</keyword>
<keyword id="KW-0597">Phosphoprotein</keyword>
<keyword id="KW-1185">Reference proteome</keyword>
<keyword id="KW-0808">Transferase</keyword>